<comment type="function">
    <text evidence="1">Catalyzes the acyloin condensation reaction between C atoms 2 and 3 of pyruvate and glyceraldehyde 3-phosphate to yield 1-deoxy-D-xylulose-5-phosphate (DXP).</text>
</comment>
<comment type="catalytic activity">
    <reaction evidence="1">
        <text>D-glyceraldehyde 3-phosphate + pyruvate + H(+) = 1-deoxy-D-xylulose 5-phosphate + CO2</text>
        <dbReference type="Rhea" id="RHEA:12605"/>
        <dbReference type="ChEBI" id="CHEBI:15361"/>
        <dbReference type="ChEBI" id="CHEBI:15378"/>
        <dbReference type="ChEBI" id="CHEBI:16526"/>
        <dbReference type="ChEBI" id="CHEBI:57792"/>
        <dbReference type="ChEBI" id="CHEBI:59776"/>
        <dbReference type="EC" id="2.2.1.7"/>
    </reaction>
</comment>
<comment type="cofactor">
    <cofactor evidence="1">
        <name>Mg(2+)</name>
        <dbReference type="ChEBI" id="CHEBI:18420"/>
    </cofactor>
    <text evidence="1">Binds 1 Mg(2+) ion per subunit.</text>
</comment>
<comment type="cofactor">
    <cofactor evidence="1">
        <name>thiamine diphosphate</name>
        <dbReference type="ChEBI" id="CHEBI:58937"/>
    </cofactor>
    <text evidence="1">Binds 1 thiamine pyrophosphate per subunit.</text>
</comment>
<comment type="pathway">
    <text evidence="1">Metabolic intermediate biosynthesis; 1-deoxy-D-xylulose 5-phosphate biosynthesis; 1-deoxy-D-xylulose 5-phosphate from D-glyceraldehyde 3-phosphate and pyruvate: step 1/1.</text>
</comment>
<comment type="subunit">
    <text evidence="1">Homodimer.</text>
</comment>
<comment type="similarity">
    <text evidence="1">Belongs to the transketolase family. DXPS subfamily.</text>
</comment>
<accession>Q5SMD7</accession>
<organism>
    <name type="scientific">Thermus thermophilus (strain ATCC 27634 / DSM 579 / HB8)</name>
    <dbReference type="NCBI Taxonomy" id="300852"/>
    <lineage>
        <taxon>Bacteria</taxon>
        <taxon>Thermotogati</taxon>
        <taxon>Deinococcota</taxon>
        <taxon>Deinococci</taxon>
        <taxon>Thermales</taxon>
        <taxon>Thermaceae</taxon>
        <taxon>Thermus</taxon>
    </lineage>
</organism>
<evidence type="ECO:0000255" key="1">
    <source>
        <dbReference type="HAMAP-Rule" id="MF_00315"/>
    </source>
</evidence>
<dbReference type="EC" id="2.2.1.7" evidence="1"/>
<dbReference type="EMBL" id="AP008226">
    <property type="protein sequence ID" value="BAD69829.1"/>
    <property type="molecule type" value="Genomic_DNA"/>
</dbReference>
<dbReference type="RefSeq" id="WP_011227634.1">
    <property type="nucleotide sequence ID" value="NC_006461.1"/>
</dbReference>
<dbReference type="RefSeq" id="YP_143272.1">
    <property type="nucleotide sequence ID" value="NC_006461.1"/>
</dbReference>
<dbReference type="SMR" id="Q5SMD7"/>
<dbReference type="EnsemblBacteria" id="BAD69829">
    <property type="protein sequence ID" value="BAD69829"/>
    <property type="gene ID" value="BAD69829"/>
</dbReference>
<dbReference type="GeneID" id="3167954"/>
<dbReference type="KEGG" id="ttj:TTHA0006"/>
<dbReference type="PATRIC" id="fig|300852.9.peg.6"/>
<dbReference type="eggNOG" id="COG1154">
    <property type="taxonomic scope" value="Bacteria"/>
</dbReference>
<dbReference type="HOGENOM" id="CLU_009227_1_4_0"/>
<dbReference type="PhylomeDB" id="Q5SMD7"/>
<dbReference type="UniPathway" id="UPA00064">
    <property type="reaction ID" value="UER00091"/>
</dbReference>
<dbReference type="Proteomes" id="UP000000532">
    <property type="component" value="Chromosome"/>
</dbReference>
<dbReference type="GO" id="GO:0005829">
    <property type="term" value="C:cytosol"/>
    <property type="evidence" value="ECO:0007669"/>
    <property type="project" value="TreeGrafter"/>
</dbReference>
<dbReference type="GO" id="GO:0008661">
    <property type="term" value="F:1-deoxy-D-xylulose-5-phosphate synthase activity"/>
    <property type="evidence" value="ECO:0007669"/>
    <property type="project" value="UniProtKB-UniRule"/>
</dbReference>
<dbReference type="GO" id="GO:0000287">
    <property type="term" value="F:magnesium ion binding"/>
    <property type="evidence" value="ECO:0007669"/>
    <property type="project" value="UniProtKB-UniRule"/>
</dbReference>
<dbReference type="GO" id="GO:0030976">
    <property type="term" value="F:thiamine pyrophosphate binding"/>
    <property type="evidence" value="ECO:0007669"/>
    <property type="project" value="UniProtKB-UniRule"/>
</dbReference>
<dbReference type="GO" id="GO:0052865">
    <property type="term" value="P:1-deoxy-D-xylulose 5-phosphate biosynthetic process"/>
    <property type="evidence" value="ECO:0007669"/>
    <property type="project" value="UniProtKB-UniPathway"/>
</dbReference>
<dbReference type="GO" id="GO:0019288">
    <property type="term" value="P:isopentenyl diphosphate biosynthetic process, methylerythritol 4-phosphate pathway"/>
    <property type="evidence" value="ECO:0007669"/>
    <property type="project" value="TreeGrafter"/>
</dbReference>
<dbReference type="GO" id="GO:0016114">
    <property type="term" value="P:terpenoid biosynthetic process"/>
    <property type="evidence" value="ECO:0007669"/>
    <property type="project" value="UniProtKB-UniRule"/>
</dbReference>
<dbReference type="GO" id="GO:0009228">
    <property type="term" value="P:thiamine biosynthetic process"/>
    <property type="evidence" value="ECO:0007669"/>
    <property type="project" value="UniProtKB-UniRule"/>
</dbReference>
<dbReference type="CDD" id="cd02007">
    <property type="entry name" value="TPP_DXS"/>
    <property type="match status" value="1"/>
</dbReference>
<dbReference type="CDD" id="cd07033">
    <property type="entry name" value="TPP_PYR_DXS_TK_like"/>
    <property type="match status" value="1"/>
</dbReference>
<dbReference type="FunFam" id="3.40.50.970:FF:000005">
    <property type="entry name" value="1-deoxy-D-xylulose-5-phosphate synthase"/>
    <property type="match status" value="1"/>
</dbReference>
<dbReference type="Gene3D" id="3.40.50.920">
    <property type="match status" value="1"/>
</dbReference>
<dbReference type="Gene3D" id="3.40.50.970">
    <property type="match status" value="2"/>
</dbReference>
<dbReference type="HAMAP" id="MF_00315">
    <property type="entry name" value="DXP_synth"/>
    <property type="match status" value="1"/>
</dbReference>
<dbReference type="InterPro" id="IPR005477">
    <property type="entry name" value="Dxylulose-5-P_synthase"/>
</dbReference>
<dbReference type="InterPro" id="IPR029061">
    <property type="entry name" value="THDP-binding"/>
</dbReference>
<dbReference type="InterPro" id="IPR009014">
    <property type="entry name" value="Transketo_C/PFOR_II"/>
</dbReference>
<dbReference type="InterPro" id="IPR005475">
    <property type="entry name" value="Transketolase-like_Pyr-bd"/>
</dbReference>
<dbReference type="InterPro" id="IPR020826">
    <property type="entry name" value="Transketolase_BS"/>
</dbReference>
<dbReference type="InterPro" id="IPR033248">
    <property type="entry name" value="Transketolase_C"/>
</dbReference>
<dbReference type="NCBIfam" id="TIGR00204">
    <property type="entry name" value="dxs"/>
    <property type="match status" value="1"/>
</dbReference>
<dbReference type="NCBIfam" id="NF003933">
    <property type="entry name" value="PRK05444.2-2"/>
    <property type="match status" value="1"/>
</dbReference>
<dbReference type="PANTHER" id="PTHR43322">
    <property type="entry name" value="1-D-DEOXYXYLULOSE 5-PHOSPHATE SYNTHASE-RELATED"/>
    <property type="match status" value="1"/>
</dbReference>
<dbReference type="PANTHER" id="PTHR43322:SF5">
    <property type="entry name" value="1-DEOXY-D-XYLULOSE-5-PHOSPHATE SYNTHASE, CHLOROPLASTIC"/>
    <property type="match status" value="1"/>
</dbReference>
<dbReference type="Pfam" id="PF13292">
    <property type="entry name" value="DXP_synthase_N"/>
    <property type="match status" value="1"/>
</dbReference>
<dbReference type="Pfam" id="PF02779">
    <property type="entry name" value="Transket_pyr"/>
    <property type="match status" value="1"/>
</dbReference>
<dbReference type="Pfam" id="PF02780">
    <property type="entry name" value="Transketolase_C"/>
    <property type="match status" value="1"/>
</dbReference>
<dbReference type="SMART" id="SM00861">
    <property type="entry name" value="Transket_pyr"/>
    <property type="match status" value="1"/>
</dbReference>
<dbReference type="SUPFAM" id="SSF52518">
    <property type="entry name" value="Thiamin diphosphate-binding fold (THDP-binding)"/>
    <property type="match status" value="2"/>
</dbReference>
<dbReference type="SUPFAM" id="SSF52922">
    <property type="entry name" value="TK C-terminal domain-like"/>
    <property type="match status" value="1"/>
</dbReference>
<dbReference type="PROSITE" id="PS00802">
    <property type="entry name" value="TRANSKETOLASE_2"/>
    <property type="match status" value="1"/>
</dbReference>
<protein>
    <recommendedName>
        <fullName evidence="1">1-deoxy-D-xylulose-5-phosphate synthase</fullName>
        <ecNumber evidence="1">2.2.1.7</ecNumber>
    </recommendedName>
    <alternativeName>
        <fullName evidence="1">1-deoxyxylulose-5-phosphate synthase</fullName>
        <shortName evidence="1">DXP synthase</shortName>
        <shortName evidence="1">DXPS</shortName>
    </alternativeName>
</protein>
<name>DXS_THET8</name>
<feature type="chain" id="PRO_0000256498" description="1-deoxy-D-xylulose-5-phosphate synthase">
    <location>
        <begin position="1"/>
        <end position="615"/>
    </location>
</feature>
<feature type="binding site" evidence="1">
    <location>
        <position position="72"/>
    </location>
    <ligand>
        <name>thiamine diphosphate</name>
        <dbReference type="ChEBI" id="CHEBI:58937"/>
    </ligand>
</feature>
<feature type="binding site" evidence="1">
    <location>
        <begin position="113"/>
        <end position="115"/>
    </location>
    <ligand>
        <name>thiamine diphosphate</name>
        <dbReference type="ChEBI" id="CHEBI:58937"/>
    </ligand>
</feature>
<feature type="binding site" evidence="1">
    <location>
        <position position="144"/>
    </location>
    <ligand>
        <name>Mg(2+)</name>
        <dbReference type="ChEBI" id="CHEBI:18420"/>
    </ligand>
</feature>
<feature type="binding site" evidence="1">
    <location>
        <begin position="145"/>
        <end position="146"/>
    </location>
    <ligand>
        <name>thiamine diphosphate</name>
        <dbReference type="ChEBI" id="CHEBI:58937"/>
    </ligand>
</feature>
<feature type="binding site" evidence="1">
    <location>
        <position position="173"/>
    </location>
    <ligand>
        <name>Mg(2+)</name>
        <dbReference type="ChEBI" id="CHEBI:18420"/>
    </ligand>
</feature>
<feature type="binding site" evidence="1">
    <location>
        <position position="173"/>
    </location>
    <ligand>
        <name>thiamine diphosphate</name>
        <dbReference type="ChEBI" id="CHEBI:58937"/>
    </ligand>
</feature>
<feature type="binding site" evidence="1">
    <location>
        <position position="281"/>
    </location>
    <ligand>
        <name>thiamine diphosphate</name>
        <dbReference type="ChEBI" id="CHEBI:58937"/>
    </ligand>
</feature>
<feature type="binding site" evidence="1">
    <location>
        <position position="360"/>
    </location>
    <ligand>
        <name>thiamine diphosphate</name>
        <dbReference type="ChEBI" id="CHEBI:58937"/>
    </ligand>
</feature>
<sequence length="615" mass="67657">MILDKVNSPEDLKRLSLEELLLLAEEIRSEIIRVTAQNGGHLASSLGAVELVLALHRVFDSPRDRILFDVGHQAYAHKLVTGRKDRFHTLRKEGGISGFTKVSESPHDAITAGHASTSLANALGMVLARDLMGEDYHVVAVIGDGALTGGMALAALNKIGELQKRMLIVLNDNEMSISENVGALNKYFKELQIRKWVQDAEKLGKNILERISPQLFGLVDRAKEAAKFLLHQENPFYAWGIRYVGPVDGHDLKGLVHILEHLKALDGPTLLHVVTKKGKGYKVAEADPIYWHGPPGFDPKKPEKVSKGYTWSQAFGDAVTELAHMEPRLFVLTPAMREGSGLVRYSLEHPERYLDVGICEDVAVTTAAGLALRGMKPIVAIYSTFLQRAYDQVIHDVAIENLPVVFAIDRAGIVGADGATHHGVFDIAYLRTVPNLQIAAPKDALELRAMLKKALEVGGPVAIRYPRDNVERAPEGVWPEIAWGKWEVLKEGTEAYILAFGKTLRYALEAAGDDPRVGVVNARFLKPLDREMLRELSRYKLLTVEDHQKMGGFGSAVLEALNEMGLKPEVQILGLPDRFFEHGAIPSLHRQAGIDAEGIRKALAAMGVALVHERA</sequence>
<gene>
    <name evidence="1" type="primary">dxs</name>
    <name type="ordered locus">TTHA0006</name>
</gene>
<keyword id="KW-0414">Isoprene biosynthesis</keyword>
<keyword id="KW-0460">Magnesium</keyword>
<keyword id="KW-0479">Metal-binding</keyword>
<keyword id="KW-1185">Reference proteome</keyword>
<keyword id="KW-0784">Thiamine biosynthesis</keyword>
<keyword id="KW-0786">Thiamine pyrophosphate</keyword>
<keyword id="KW-0808">Transferase</keyword>
<proteinExistence type="inferred from homology"/>
<reference key="1">
    <citation type="submission" date="2004-11" db="EMBL/GenBank/DDBJ databases">
        <title>Complete genome sequence of Thermus thermophilus HB8.</title>
        <authorList>
            <person name="Masui R."/>
            <person name="Kurokawa K."/>
            <person name="Nakagawa N."/>
            <person name="Tokunaga F."/>
            <person name="Koyama Y."/>
            <person name="Shibata T."/>
            <person name="Oshima T."/>
            <person name="Yokoyama S."/>
            <person name="Yasunaga T."/>
            <person name="Kuramitsu S."/>
        </authorList>
    </citation>
    <scope>NUCLEOTIDE SEQUENCE [LARGE SCALE GENOMIC DNA]</scope>
    <source>
        <strain>ATCC 27634 / DSM 579 / HB8</strain>
    </source>
</reference>